<accession>Q6H1V1</accession>
<name>BEST3_MOUSE</name>
<protein>
    <recommendedName>
        <fullName evidence="8">Bestrophin-3</fullName>
    </recommendedName>
    <alternativeName>
        <fullName>Vitelliform macular dystrophy 2-like protein 3</fullName>
    </alternativeName>
</protein>
<sequence>MTVTYSSKVANATFFGFHRLLLKWRGSIYKLLYREFIVFAVLYTAISLVYRLLLTGAQKRYFEKLSIYCDRYAEQIPVTFVLGFYVTLVVNRWWNQFVNLPWPDRLMLLISSSVHGSDQHGRLLRRTLMRYVNLTSLLIFRSVSTAVYKRFPTMDHVVEAGFMTADERKLFDHLKSPHLKYWVPFIWFGNLATKARNEGRIRDSVDLQSLMTEMNRYRSWCSLLFGYDWVGIPLVYTQVVTLAVYTFFFACLIGRQFLDPTKGYVGHDLDLYVPIFTLLQFFFYAGWLKVAEQLINPFGEDDDDFETNWCIDRNLQVSLLAVDEMHMSLPKMKKDIYWDDSAARPPYTLAAADYCIPSFLGSTIQMGLSGSNFPAEDWLWNYEKHGNRHSVMRRVKRFLSTHEHPGSPRRRRSFGRQASDSSMFLPPSPARDLLDVPSRNPHRGSPTRKQSRSQEGSPKLHSSMGELSTIRETSRTSTLQSLSPQSSVRSSPTKMPQVPEVLITAAEAPAFSADSHQHDSTTSILSLEFTGVQPSGTEQQVEPSGTPPGDPNPQTTSASTERDLFKFEEDLEDDRFPKRWSLPEFLESRHTSLGNLGPDPVSPRDALLLPDTETPSETNGIHPGAGSALAPDILYLMESLDKETDILEFNNEHTGESPKGTPQRPRTWF</sequence>
<gene>
    <name type="primary">Best3</name>
    <name evidence="6" type="synonym">Vmd2l3</name>
</gene>
<dbReference type="EMBL" id="AY450426">
    <property type="protein sequence ID" value="AAS09921.1"/>
    <property type="molecule type" value="mRNA"/>
</dbReference>
<dbReference type="CCDS" id="CCDS24188.1">
    <molecule id="Q6H1V1-1"/>
</dbReference>
<dbReference type="RefSeq" id="NP_001007584.1">
    <molecule id="Q6H1V1-1"/>
    <property type="nucleotide sequence ID" value="NM_001007583.1"/>
</dbReference>
<dbReference type="RefSeq" id="XP_030101013.1">
    <molecule id="Q6H1V1-2"/>
    <property type="nucleotide sequence ID" value="XM_030245153.2"/>
</dbReference>
<dbReference type="SMR" id="Q6H1V1"/>
<dbReference type="FunCoup" id="Q6H1V1">
    <property type="interactions" value="13"/>
</dbReference>
<dbReference type="STRING" id="10090.ENSMUSP00000020378"/>
<dbReference type="TCDB" id="1.A.46.1.4">
    <property type="family name" value="the anion channel-forming bestrophin (bestrophin) family"/>
</dbReference>
<dbReference type="PhosphoSitePlus" id="Q6H1V1"/>
<dbReference type="PaxDb" id="10090-ENSMUSP00000020378"/>
<dbReference type="ProteomicsDB" id="265208"/>
<dbReference type="Antibodypedia" id="29432">
    <property type="antibodies" value="316 antibodies from 27 providers"/>
</dbReference>
<dbReference type="DNASU" id="382427"/>
<dbReference type="Ensembl" id="ENSMUST00000020378.5">
    <molecule id="Q6H1V1-1"/>
    <property type="protein sequence ID" value="ENSMUSP00000020378.5"/>
    <property type="gene ID" value="ENSMUSG00000020169.5"/>
</dbReference>
<dbReference type="GeneID" id="382427"/>
<dbReference type="KEGG" id="mmu:382427"/>
<dbReference type="UCSC" id="uc007hcp.1">
    <molecule id="Q6H1V1-1"/>
    <property type="organism name" value="mouse"/>
</dbReference>
<dbReference type="AGR" id="MGI:3580298"/>
<dbReference type="CTD" id="144453"/>
<dbReference type="MGI" id="MGI:3580298">
    <property type="gene designation" value="Best3"/>
</dbReference>
<dbReference type="VEuPathDB" id="HostDB:ENSMUSG00000020169"/>
<dbReference type="eggNOG" id="KOG3547">
    <property type="taxonomic scope" value="Eukaryota"/>
</dbReference>
<dbReference type="GeneTree" id="ENSGT00940000157777"/>
<dbReference type="HOGENOM" id="CLU_018069_5_1_1"/>
<dbReference type="InParanoid" id="Q6H1V1"/>
<dbReference type="OMA" id="DWLWNYE"/>
<dbReference type="OrthoDB" id="201595at2759"/>
<dbReference type="PhylomeDB" id="Q6H1V1"/>
<dbReference type="TreeFam" id="TF315803"/>
<dbReference type="Reactome" id="R-MMU-2672351">
    <property type="pathway name" value="Stimuli-sensing channels"/>
</dbReference>
<dbReference type="BioGRID-ORCS" id="382427">
    <property type="hits" value="5 hits in 77 CRISPR screens"/>
</dbReference>
<dbReference type="ChiTaRS" id="Best3">
    <property type="organism name" value="mouse"/>
</dbReference>
<dbReference type="PRO" id="PR:Q6H1V1"/>
<dbReference type="Proteomes" id="UP000000589">
    <property type="component" value="Chromosome 10"/>
</dbReference>
<dbReference type="RNAct" id="Q6H1V1">
    <property type="molecule type" value="protein"/>
</dbReference>
<dbReference type="Bgee" id="ENSMUSG00000020169">
    <property type="expression patterns" value="Expressed in hindlimb stylopod muscle and 29 other cell types or tissues"/>
</dbReference>
<dbReference type="GO" id="GO:0034707">
    <property type="term" value="C:chloride channel complex"/>
    <property type="evidence" value="ECO:0007669"/>
    <property type="project" value="UniProtKB-KW"/>
</dbReference>
<dbReference type="GO" id="GO:0005886">
    <property type="term" value="C:plasma membrane"/>
    <property type="evidence" value="ECO:0000314"/>
    <property type="project" value="UniProtKB"/>
</dbReference>
<dbReference type="GO" id="GO:0005254">
    <property type="term" value="F:chloride channel activity"/>
    <property type="evidence" value="ECO:0000314"/>
    <property type="project" value="MGI"/>
</dbReference>
<dbReference type="GO" id="GO:0005229">
    <property type="term" value="F:intracellularly calcium-gated chloride channel activity"/>
    <property type="evidence" value="ECO:0000250"/>
    <property type="project" value="UniProtKB"/>
</dbReference>
<dbReference type="GO" id="GO:0099095">
    <property type="term" value="F:ligand-gated monoatomic anion channel activity"/>
    <property type="evidence" value="ECO:0000315"/>
    <property type="project" value="UniProtKB"/>
</dbReference>
<dbReference type="GO" id="GO:0046872">
    <property type="term" value="F:metal ion binding"/>
    <property type="evidence" value="ECO:0007669"/>
    <property type="project" value="UniProtKB-KW"/>
</dbReference>
<dbReference type="GO" id="GO:0015698">
    <property type="term" value="P:inorganic anion transport"/>
    <property type="evidence" value="ECO:0000314"/>
    <property type="project" value="MGI"/>
</dbReference>
<dbReference type="GO" id="GO:0043271">
    <property type="term" value="P:negative regulation of monoatomic ion transport"/>
    <property type="evidence" value="ECO:0000314"/>
    <property type="project" value="MGI"/>
</dbReference>
<dbReference type="InterPro" id="IPR000615">
    <property type="entry name" value="Bestrophin"/>
</dbReference>
<dbReference type="InterPro" id="IPR021134">
    <property type="entry name" value="Bestrophin-like"/>
</dbReference>
<dbReference type="PANTHER" id="PTHR10736">
    <property type="entry name" value="BESTROPHIN"/>
    <property type="match status" value="1"/>
</dbReference>
<dbReference type="PANTHER" id="PTHR10736:SF2">
    <property type="entry name" value="BESTROPHIN-3"/>
    <property type="match status" value="1"/>
</dbReference>
<dbReference type="Pfam" id="PF01062">
    <property type="entry name" value="Bestrophin"/>
    <property type="match status" value="1"/>
</dbReference>
<evidence type="ECO:0000250" key="1">
    <source>
        <dbReference type="UniProtKB" id="O76090"/>
    </source>
</evidence>
<evidence type="ECO:0000255" key="2"/>
<evidence type="ECO:0000256" key="3">
    <source>
        <dbReference type="SAM" id="MobiDB-lite"/>
    </source>
</evidence>
<evidence type="ECO:0000269" key="4">
    <source>
    </source>
</evidence>
<evidence type="ECO:0000269" key="5">
    <source>
    </source>
</evidence>
<evidence type="ECO:0000303" key="6">
    <source>
    </source>
</evidence>
<evidence type="ECO:0000303" key="7">
    <source>
    </source>
</evidence>
<evidence type="ECO:0000305" key="8"/>
<evidence type="ECO:0000305" key="9">
    <source>
    </source>
</evidence>
<keyword id="KW-0025">Alternative splicing</keyword>
<keyword id="KW-0106">Calcium</keyword>
<keyword id="KW-1003">Cell membrane</keyword>
<keyword id="KW-0868">Chloride</keyword>
<keyword id="KW-0869">Chloride channel</keyword>
<keyword id="KW-0407">Ion channel</keyword>
<keyword id="KW-0406">Ion transport</keyword>
<keyword id="KW-0472">Membrane</keyword>
<keyword id="KW-0479">Metal-binding</keyword>
<keyword id="KW-1185">Reference proteome</keyword>
<keyword id="KW-0812">Transmembrane</keyword>
<keyword id="KW-1133">Transmembrane helix</keyword>
<keyword id="KW-0813">Transport</keyword>
<reference key="1">
    <citation type="journal article" date="2004" name="Cytogenet. Genome Res.">
        <title>Cloning and characterization of the murine Vmd2 RFP-TM gene family.</title>
        <authorList>
            <person name="Kraemer F."/>
            <person name="Stoehr H."/>
            <person name="Weber B.H.F."/>
        </authorList>
    </citation>
    <scope>NUCLEOTIDE SEQUENCE [MRNA] (ISOFORM 1)</scope>
    <source>
        <strain>C57BL/6J</strain>
        <tissue>Heart</tissue>
    </source>
</reference>
<reference key="2">
    <citation type="journal article" date="2008" name="J. Membr. Biol.">
        <title>A variant of the Ca2+-activated Cl channel Best3 is expressed in mouse exocrine glands.</title>
        <authorList>
            <person name="Srivastava A."/>
            <person name="Romanenko V.G."/>
            <person name="Gonzalez-Begne M."/>
            <person name="Catalan M.A."/>
            <person name="Melvin J.E."/>
        </authorList>
    </citation>
    <scope>NUCLEOTIDE SEQUENCE [MRNA] (ISOFORMS 1 AND 2)</scope>
    <scope>FUNCTION</scope>
    <scope>CATALYTIC ACTIVITY</scope>
    <scope>SUBCELLULAR LOCATION</scope>
    <scope>TISSUE SPECIFICITY</scope>
</reference>
<proteinExistence type="evidence at protein level"/>
<comment type="function">
    <molecule>Isoform 1</molecule>
    <text evidence="5">Ligand-gated anion channel that allows the movement of chloride monoatomic anions across cell membranes when activated by calcium (Ca2+).</text>
</comment>
<comment type="function">
    <molecule>Isoform 2</molecule>
    <text evidence="5">Does not function as calcium-gated chloride channel.</text>
</comment>
<comment type="catalytic activity">
    <molecule>Isoform 1</molecule>
    <reaction evidence="5">
        <text>chloride(in) = chloride(out)</text>
        <dbReference type="Rhea" id="RHEA:29823"/>
        <dbReference type="ChEBI" id="CHEBI:17996"/>
    </reaction>
</comment>
<comment type="subcellular location">
    <molecule>Isoform 1</molecule>
    <subcellularLocation>
        <location evidence="5">Cell membrane</location>
    </subcellularLocation>
    <text evidence="5">Localized also in punctate structures in the cytosolic compartment.</text>
</comment>
<comment type="subcellular location">
    <molecule>Isoform 2</molecule>
    <subcellularLocation>
        <location evidence="5">Cell membrane</location>
    </subcellularLocation>
    <text evidence="5">Localized also in punctate structures in the cytosolic compartment.</text>
</comment>
<comment type="alternative products">
    <event type="alternative splicing"/>
    <isoform>
        <id>Q6H1V1-1</id>
        <name>1</name>
        <name evidence="6">variant 1</name>
        <sequence type="displayed"/>
    </isoform>
    <isoform>
        <id>Q6H1V1-2</id>
        <name>2</name>
        <name evidence="6">variant 5</name>
        <name evidence="7">Best3-Ddelta2,3,6</name>
        <sequence type="described" ref="VSP_062274 VSP_062275"/>
    </isoform>
</comment>
<comment type="tissue specificity">
    <molecule>Isoform 1</molecule>
    <text evidence="4 5">Expressed in heart.</text>
</comment>
<comment type="tissue specificity">
    <molecule>Isoform 2</molecule>
    <text evidence="4 5">Expressed in brain, retina/retinal pigment epithelium (RPE) and skeletal muscle (PubMed:15218265). Expressed in acinar cells of parotid glands (PubMed:18414923). Expressed in lung, kidney and testis (PubMed:15218265, PubMed:18414923).</text>
</comment>
<comment type="similarity">
    <text evidence="8">Belongs to the anion channel-forming bestrophin (TC 1.A.46) family. Calcium-sensitive chloride channel subfamily.</text>
</comment>
<feature type="chain" id="PRO_0000143122" description="Bestrophin-3">
    <location>
        <begin position="1"/>
        <end position="669"/>
    </location>
</feature>
<feature type="topological domain" description="Cytoplasmic" evidence="2">
    <location>
        <begin position="1"/>
        <end position="31"/>
    </location>
</feature>
<feature type="transmembrane region" description="Helical" evidence="1">
    <location>
        <begin position="32"/>
        <end position="51"/>
    </location>
</feature>
<feature type="topological domain" description="Extracellular" evidence="2">
    <location>
        <begin position="52"/>
        <end position="60"/>
    </location>
</feature>
<feature type="transmembrane region" description="Helical" evidence="1">
    <location>
        <begin position="61"/>
        <end position="82"/>
    </location>
</feature>
<feature type="topological domain" description="Cytoplasmic" evidence="2">
    <location>
        <begin position="83"/>
        <end position="237"/>
    </location>
</feature>
<feature type="transmembrane region" description="Helical" evidence="1">
    <location>
        <begin position="238"/>
        <end position="255"/>
    </location>
</feature>
<feature type="topological domain" description="Extracellular" evidence="2">
    <location>
        <begin position="256"/>
        <end position="274"/>
    </location>
</feature>
<feature type="transmembrane region" description="Helical" evidence="1">
    <location>
        <begin position="275"/>
        <end position="288"/>
    </location>
</feature>
<feature type="topological domain" description="Cytoplasmic" evidence="9">
    <location>
        <begin position="289"/>
        <end position="669"/>
    </location>
</feature>
<feature type="region of interest" description="Disordered" evidence="3">
    <location>
        <begin position="399"/>
        <end position="496"/>
    </location>
</feature>
<feature type="region of interest" description="Disordered" evidence="3">
    <location>
        <begin position="533"/>
        <end position="560"/>
    </location>
</feature>
<feature type="region of interest" description="Disordered" evidence="3">
    <location>
        <begin position="591"/>
        <end position="627"/>
    </location>
</feature>
<feature type="region of interest" description="Disordered" evidence="3">
    <location>
        <begin position="646"/>
        <end position="669"/>
    </location>
</feature>
<feature type="compositionally biased region" description="Basic residues" evidence="3">
    <location>
        <begin position="440"/>
        <end position="451"/>
    </location>
</feature>
<feature type="compositionally biased region" description="Low complexity" evidence="3">
    <location>
        <begin position="475"/>
        <end position="492"/>
    </location>
</feature>
<feature type="compositionally biased region" description="Polar residues" evidence="3">
    <location>
        <begin position="533"/>
        <end position="543"/>
    </location>
</feature>
<feature type="compositionally biased region" description="Basic and acidic residues" evidence="3">
    <location>
        <begin position="646"/>
        <end position="656"/>
    </location>
</feature>
<feature type="binding site" description="in other chain" evidence="1">
    <location>
        <position position="10"/>
    </location>
    <ligand>
        <name>Ca(2+)</name>
        <dbReference type="ChEBI" id="CHEBI:29108"/>
        <note>ligand shared between two neighboring subunits</note>
    </ligand>
</feature>
<feature type="binding site" evidence="1">
    <location>
        <position position="293"/>
    </location>
    <ligand>
        <name>Ca(2+)</name>
        <dbReference type="ChEBI" id="CHEBI:29108"/>
        <note>ligand shared between two neighboring subunits</note>
    </ligand>
</feature>
<feature type="binding site" evidence="1">
    <location>
        <position position="296"/>
    </location>
    <ligand>
        <name>Ca(2+)</name>
        <dbReference type="ChEBI" id="CHEBI:29108"/>
        <note>ligand shared between two neighboring subunits</note>
    </ligand>
</feature>
<feature type="binding site" evidence="1">
    <location>
        <position position="301"/>
    </location>
    <ligand>
        <name>Ca(2+)</name>
        <dbReference type="ChEBI" id="CHEBI:29108"/>
        <note>ligand shared between two neighboring subunits</note>
    </ligand>
</feature>
<feature type="binding site" evidence="1">
    <location>
        <position position="304"/>
    </location>
    <ligand>
        <name>Ca(2+)</name>
        <dbReference type="ChEBI" id="CHEBI:29108"/>
        <note>ligand shared between two neighboring subunits</note>
    </ligand>
</feature>
<feature type="splice variant" id="VSP_062274" description="In isoform 2.">
    <location>
        <begin position="1"/>
        <end position="106"/>
    </location>
</feature>
<feature type="splice variant" id="VSP_062275" description="In isoform 2.">
    <location>
        <begin position="213"/>
        <end position="238"/>
    </location>
</feature>
<organism>
    <name type="scientific">Mus musculus</name>
    <name type="common">Mouse</name>
    <dbReference type="NCBI Taxonomy" id="10090"/>
    <lineage>
        <taxon>Eukaryota</taxon>
        <taxon>Metazoa</taxon>
        <taxon>Chordata</taxon>
        <taxon>Craniata</taxon>
        <taxon>Vertebrata</taxon>
        <taxon>Euteleostomi</taxon>
        <taxon>Mammalia</taxon>
        <taxon>Eutheria</taxon>
        <taxon>Euarchontoglires</taxon>
        <taxon>Glires</taxon>
        <taxon>Rodentia</taxon>
        <taxon>Myomorpha</taxon>
        <taxon>Muroidea</taxon>
        <taxon>Muridae</taxon>
        <taxon>Murinae</taxon>
        <taxon>Mus</taxon>
        <taxon>Mus</taxon>
    </lineage>
</organism>